<gene>
    <name evidence="1" type="primary">tig</name>
    <name type="ordered locus">RHOS4_17480</name>
    <name type="ORF">RSP_0142</name>
</gene>
<reference key="1">
    <citation type="submission" date="2005-09" db="EMBL/GenBank/DDBJ databases">
        <title>Complete sequence of chromosome 1 of Rhodobacter sphaeroides 2.4.1.</title>
        <authorList>
            <person name="Copeland A."/>
            <person name="Lucas S."/>
            <person name="Lapidus A."/>
            <person name="Barry K."/>
            <person name="Detter J.C."/>
            <person name="Glavina T."/>
            <person name="Hammon N."/>
            <person name="Israni S."/>
            <person name="Pitluck S."/>
            <person name="Richardson P."/>
            <person name="Mackenzie C."/>
            <person name="Choudhary M."/>
            <person name="Larimer F."/>
            <person name="Hauser L.J."/>
            <person name="Land M."/>
            <person name="Donohue T.J."/>
            <person name="Kaplan S."/>
        </authorList>
    </citation>
    <scope>NUCLEOTIDE SEQUENCE [LARGE SCALE GENOMIC DNA]</scope>
    <source>
        <strain>ATCC 17023 / DSM 158 / JCM 6121 / CCUG 31486 / LMG 2827 / NBRC 12203 / NCIMB 8253 / ATH 2.4.1.</strain>
    </source>
</reference>
<feature type="chain" id="PRO_0000256602" description="Trigger factor">
    <location>
        <begin position="1"/>
        <end position="444"/>
    </location>
</feature>
<feature type="domain" description="PPIase FKBP-type" evidence="1">
    <location>
        <begin position="166"/>
        <end position="251"/>
    </location>
</feature>
<evidence type="ECO:0000255" key="1">
    <source>
        <dbReference type="HAMAP-Rule" id="MF_00303"/>
    </source>
</evidence>
<comment type="function">
    <text evidence="1">Involved in protein export. Acts as a chaperone by maintaining the newly synthesized protein in an open conformation. Functions as a peptidyl-prolyl cis-trans isomerase.</text>
</comment>
<comment type="catalytic activity">
    <reaction evidence="1">
        <text>[protein]-peptidylproline (omega=180) = [protein]-peptidylproline (omega=0)</text>
        <dbReference type="Rhea" id="RHEA:16237"/>
        <dbReference type="Rhea" id="RHEA-COMP:10747"/>
        <dbReference type="Rhea" id="RHEA-COMP:10748"/>
        <dbReference type="ChEBI" id="CHEBI:83833"/>
        <dbReference type="ChEBI" id="CHEBI:83834"/>
        <dbReference type="EC" id="5.2.1.8"/>
    </reaction>
</comment>
<comment type="subcellular location">
    <subcellularLocation>
        <location>Cytoplasm</location>
    </subcellularLocation>
    <text evidence="1">About half TF is bound to the ribosome near the polypeptide exit tunnel while the other half is free in the cytoplasm.</text>
</comment>
<comment type="domain">
    <text evidence="1">Consists of 3 domains; the N-terminus binds the ribosome, the middle domain has PPIase activity, while the C-terminus has intrinsic chaperone activity on its own.</text>
</comment>
<comment type="similarity">
    <text evidence="1">Belongs to the FKBP-type PPIase family. Tig subfamily.</text>
</comment>
<protein>
    <recommendedName>
        <fullName evidence="1">Trigger factor</fullName>
        <shortName evidence="1">TF</shortName>
        <ecNumber evidence="1">5.2.1.8</ecNumber>
    </recommendedName>
    <alternativeName>
        <fullName evidence="1">PPIase</fullName>
    </alternativeName>
</protein>
<dbReference type="EC" id="5.2.1.8" evidence="1"/>
<dbReference type="EMBL" id="CP000143">
    <property type="protein sequence ID" value="ABA79316.1"/>
    <property type="molecule type" value="Genomic_DNA"/>
</dbReference>
<dbReference type="RefSeq" id="WP_002720285.1">
    <property type="nucleotide sequence ID" value="NZ_CP030271.1"/>
</dbReference>
<dbReference type="RefSeq" id="YP_353217.1">
    <property type="nucleotide sequence ID" value="NC_007493.2"/>
</dbReference>
<dbReference type="SMR" id="Q3J1L8"/>
<dbReference type="STRING" id="272943.RSP_0142"/>
<dbReference type="EnsemblBacteria" id="ABA79316">
    <property type="protein sequence ID" value="ABA79316"/>
    <property type="gene ID" value="RSP_0142"/>
</dbReference>
<dbReference type="GeneID" id="3719562"/>
<dbReference type="KEGG" id="rsp:RSP_0142"/>
<dbReference type="PATRIC" id="fig|272943.9.peg.2082"/>
<dbReference type="eggNOG" id="COG0544">
    <property type="taxonomic scope" value="Bacteria"/>
</dbReference>
<dbReference type="OrthoDB" id="9767721at2"/>
<dbReference type="PhylomeDB" id="Q3J1L8"/>
<dbReference type="Proteomes" id="UP000002703">
    <property type="component" value="Chromosome 1"/>
</dbReference>
<dbReference type="GO" id="GO:0005737">
    <property type="term" value="C:cytoplasm"/>
    <property type="evidence" value="ECO:0007669"/>
    <property type="project" value="UniProtKB-SubCell"/>
</dbReference>
<dbReference type="GO" id="GO:0003755">
    <property type="term" value="F:peptidyl-prolyl cis-trans isomerase activity"/>
    <property type="evidence" value="ECO:0007669"/>
    <property type="project" value="UniProtKB-UniRule"/>
</dbReference>
<dbReference type="GO" id="GO:0051301">
    <property type="term" value="P:cell division"/>
    <property type="evidence" value="ECO:0007669"/>
    <property type="project" value="UniProtKB-KW"/>
</dbReference>
<dbReference type="GO" id="GO:0006457">
    <property type="term" value="P:protein folding"/>
    <property type="evidence" value="ECO:0007669"/>
    <property type="project" value="UniProtKB-UniRule"/>
</dbReference>
<dbReference type="GO" id="GO:0015031">
    <property type="term" value="P:protein transport"/>
    <property type="evidence" value="ECO:0007669"/>
    <property type="project" value="UniProtKB-UniRule"/>
</dbReference>
<dbReference type="FunFam" id="3.10.50.40:FF:000001">
    <property type="entry name" value="Trigger factor"/>
    <property type="match status" value="1"/>
</dbReference>
<dbReference type="Gene3D" id="3.10.50.40">
    <property type="match status" value="1"/>
</dbReference>
<dbReference type="Gene3D" id="3.30.70.1050">
    <property type="entry name" value="Trigger factor ribosome-binding domain"/>
    <property type="match status" value="1"/>
</dbReference>
<dbReference type="Gene3D" id="1.10.3120.10">
    <property type="entry name" value="Trigger factor, C-terminal domain"/>
    <property type="match status" value="1"/>
</dbReference>
<dbReference type="HAMAP" id="MF_00303">
    <property type="entry name" value="Trigger_factor_Tig"/>
    <property type="match status" value="1"/>
</dbReference>
<dbReference type="InterPro" id="IPR046357">
    <property type="entry name" value="PPIase_dom_sf"/>
</dbReference>
<dbReference type="InterPro" id="IPR001179">
    <property type="entry name" value="PPIase_FKBP_dom"/>
</dbReference>
<dbReference type="InterPro" id="IPR005215">
    <property type="entry name" value="Trig_fac"/>
</dbReference>
<dbReference type="InterPro" id="IPR008880">
    <property type="entry name" value="Trigger_fac_C"/>
</dbReference>
<dbReference type="InterPro" id="IPR037041">
    <property type="entry name" value="Trigger_fac_C_sf"/>
</dbReference>
<dbReference type="InterPro" id="IPR008881">
    <property type="entry name" value="Trigger_fac_ribosome-bd_bac"/>
</dbReference>
<dbReference type="InterPro" id="IPR036611">
    <property type="entry name" value="Trigger_fac_ribosome-bd_sf"/>
</dbReference>
<dbReference type="InterPro" id="IPR027304">
    <property type="entry name" value="Trigger_fact/SurA_dom_sf"/>
</dbReference>
<dbReference type="NCBIfam" id="TIGR00115">
    <property type="entry name" value="tig"/>
    <property type="match status" value="1"/>
</dbReference>
<dbReference type="Pfam" id="PF00254">
    <property type="entry name" value="FKBP_C"/>
    <property type="match status" value="1"/>
</dbReference>
<dbReference type="Pfam" id="PF05698">
    <property type="entry name" value="Trigger_C"/>
    <property type="match status" value="1"/>
</dbReference>
<dbReference type="Pfam" id="PF05697">
    <property type="entry name" value="Trigger_N"/>
    <property type="match status" value="1"/>
</dbReference>
<dbReference type="PIRSF" id="PIRSF003095">
    <property type="entry name" value="Trigger_factor"/>
    <property type="match status" value="1"/>
</dbReference>
<dbReference type="SUPFAM" id="SSF54534">
    <property type="entry name" value="FKBP-like"/>
    <property type="match status" value="1"/>
</dbReference>
<dbReference type="SUPFAM" id="SSF109998">
    <property type="entry name" value="Triger factor/SurA peptide-binding domain-like"/>
    <property type="match status" value="1"/>
</dbReference>
<dbReference type="SUPFAM" id="SSF102735">
    <property type="entry name" value="Trigger factor ribosome-binding domain"/>
    <property type="match status" value="1"/>
</dbReference>
<dbReference type="PROSITE" id="PS50059">
    <property type="entry name" value="FKBP_PPIASE"/>
    <property type="match status" value="1"/>
</dbReference>
<proteinExistence type="inferred from homology"/>
<name>TIG_CERS4</name>
<organism>
    <name type="scientific">Cereibacter sphaeroides (strain ATCC 17023 / DSM 158 / JCM 6121 / CCUG 31486 / LMG 2827 / NBRC 12203 / NCIMB 8253 / ATH 2.4.1.)</name>
    <name type="common">Rhodobacter sphaeroides</name>
    <dbReference type="NCBI Taxonomy" id="272943"/>
    <lineage>
        <taxon>Bacteria</taxon>
        <taxon>Pseudomonadati</taxon>
        <taxon>Pseudomonadota</taxon>
        <taxon>Alphaproteobacteria</taxon>
        <taxon>Rhodobacterales</taxon>
        <taxon>Paracoccaceae</taxon>
        <taxon>Cereibacter</taxon>
    </lineage>
</organism>
<sequence>MQVTETQKEGLKRAYTITVTAAELDAKVQEKLVEAQPDIEMKGFRKGKVPLAMLKKQFGPRLLGDAMQDAIDGAMRDHLETSGDRPAMQPEVRMVDGETWKEGTDVVVEMKYEALPEIPEIETSKVSLERLVVKADEAAIEEALKNLAESAQNFEDRRKGSKAKDGDQVVIDFKGSVDGELFEGGSAEDYPLVLGSGSFIPGFEEQLVGTKVDDEVTVKVSFPAEYGAKHLAGKEAEFACTVKAVKAPKAAELDDELAKKYGAEDLAALKSQISERLEAEYKGASRAVLKRALLDQLDQMVSFELPSKLVEAEAHQIAHQLWHEEHPEEHGHNHGNIEPTDEHKALAERRVRLGLLLAEIGRKAEVTVTDAEMTQAVLAQARQYPGQERAYFEFVQKNPQIQQQLRAPIFEDKVVDLILEGATVTEKEVGKDDLQKAIEALDEM</sequence>
<accession>Q3J1L8</accession>
<keyword id="KW-0131">Cell cycle</keyword>
<keyword id="KW-0132">Cell division</keyword>
<keyword id="KW-0143">Chaperone</keyword>
<keyword id="KW-0963">Cytoplasm</keyword>
<keyword id="KW-0413">Isomerase</keyword>
<keyword id="KW-1185">Reference proteome</keyword>
<keyword id="KW-0697">Rotamase</keyword>